<dbReference type="EC" id="2.7.1.50" evidence="1"/>
<dbReference type="EMBL" id="CP000750">
    <property type="protein sequence ID" value="ABS02340.1"/>
    <property type="molecule type" value="Genomic_DNA"/>
</dbReference>
<dbReference type="RefSeq" id="WP_012084812.1">
    <property type="nucleotide sequence ID" value="NC_009664.2"/>
</dbReference>
<dbReference type="SMR" id="A6W6A1"/>
<dbReference type="STRING" id="266940.Krad_0852"/>
<dbReference type="KEGG" id="kra:Krad_0852"/>
<dbReference type="eggNOG" id="COG2145">
    <property type="taxonomic scope" value="Bacteria"/>
</dbReference>
<dbReference type="HOGENOM" id="CLU_019943_0_1_11"/>
<dbReference type="OrthoDB" id="8909021at2"/>
<dbReference type="UniPathway" id="UPA00060">
    <property type="reaction ID" value="UER00139"/>
</dbReference>
<dbReference type="Proteomes" id="UP000001116">
    <property type="component" value="Chromosome"/>
</dbReference>
<dbReference type="GO" id="GO:0005524">
    <property type="term" value="F:ATP binding"/>
    <property type="evidence" value="ECO:0007669"/>
    <property type="project" value="UniProtKB-UniRule"/>
</dbReference>
<dbReference type="GO" id="GO:0004417">
    <property type="term" value="F:hydroxyethylthiazole kinase activity"/>
    <property type="evidence" value="ECO:0007669"/>
    <property type="project" value="UniProtKB-UniRule"/>
</dbReference>
<dbReference type="GO" id="GO:0000287">
    <property type="term" value="F:magnesium ion binding"/>
    <property type="evidence" value="ECO:0007669"/>
    <property type="project" value="UniProtKB-UniRule"/>
</dbReference>
<dbReference type="GO" id="GO:0009228">
    <property type="term" value="P:thiamine biosynthetic process"/>
    <property type="evidence" value="ECO:0007669"/>
    <property type="project" value="UniProtKB-KW"/>
</dbReference>
<dbReference type="GO" id="GO:0009229">
    <property type="term" value="P:thiamine diphosphate biosynthetic process"/>
    <property type="evidence" value="ECO:0007669"/>
    <property type="project" value="UniProtKB-UniRule"/>
</dbReference>
<dbReference type="Gene3D" id="3.40.1190.20">
    <property type="match status" value="1"/>
</dbReference>
<dbReference type="HAMAP" id="MF_00228">
    <property type="entry name" value="Thz_kinase"/>
    <property type="match status" value="1"/>
</dbReference>
<dbReference type="InterPro" id="IPR000417">
    <property type="entry name" value="Hyethyz_kinase"/>
</dbReference>
<dbReference type="InterPro" id="IPR029056">
    <property type="entry name" value="Ribokinase-like"/>
</dbReference>
<dbReference type="NCBIfam" id="NF006830">
    <property type="entry name" value="PRK09355.1"/>
    <property type="match status" value="1"/>
</dbReference>
<dbReference type="Pfam" id="PF02110">
    <property type="entry name" value="HK"/>
    <property type="match status" value="1"/>
</dbReference>
<dbReference type="PIRSF" id="PIRSF000513">
    <property type="entry name" value="Thz_kinase"/>
    <property type="match status" value="1"/>
</dbReference>
<dbReference type="PRINTS" id="PR01099">
    <property type="entry name" value="HYETHTZKNASE"/>
</dbReference>
<dbReference type="SUPFAM" id="SSF53613">
    <property type="entry name" value="Ribokinase-like"/>
    <property type="match status" value="1"/>
</dbReference>
<organism>
    <name type="scientific">Kineococcus radiotolerans (strain ATCC BAA-149 / DSM 14245 / SRS30216)</name>
    <dbReference type="NCBI Taxonomy" id="266940"/>
    <lineage>
        <taxon>Bacteria</taxon>
        <taxon>Bacillati</taxon>
        <taxon>Actinomycetota</taxon>
        <taxon>Actinomycetes</taxon>
        <taxon>Kineosporiales</taxon>
        <taxon>Kineosporiaceae</taxon>
        <taxon>Kineococcus</taxon>
    </lineage>
</organism>
<protein>
    <recommendedName>
        <fullName evidence="1">Hydroxyethylthiazole kinase</fullName>
        <ecNumber evidence="1">2.7.1.50</ecNumber>
    </recommendedName>
    <alternativeName>
        <fullName evidence="1">4-methyl-5-beta-hydroxyethylthiazole kinase</fullName>
        <shortName evidence="1">TH kinase</shortName>
        <shortName evidence="1">Thz kinase</shortName>
    </alternativeName>
</protein>
<proteinExistence type="inferred from homology"/>
<evidence type="ECO:0000255" key="1">
    <source>
        <dbReference type="HAMAP-Rule" id="MF_00228"/>
    </source>
</evidence>
<accession>A6W6A1</accession>
<comment type="function">
    <text evidence="1">Catalyzes the phosphorylation of the hydroxyl group of 4-methyl-5-beta-hydroxyethylthiazole (THZ).</text>
</comment>
<comment type="catalytic activity">
    <reaction evidence="1">
        <text>5-(2-hydroxyethyl)-4-methylthiazole + ATP = 4-methyl-5-(2-phosphooxyethyl)-thiazole + ADP + H(+)</text>
        <dbReference type="Rhea" id="RHEA:24212"/>
        <dbReference type="ChEBI" id="CHEBI:15378"/>
        <dbReference type="ChEBI" id="CHEBI:17957"/>
        <dbReference type="ChEBI" id="CHEBI:30616"/>
        <dbReference type="ChEBI" id="CHEBI:58296"/>
        <dbReference type="ChEBI" id="CHEBI:456216"/>
        <dbReference type="EC" id="2.7.1.50"/>
    </reaction>
</comment>
<comment type="cofactor">
    <cofactor evidence="1">
        <name>Mg(2+)</name>
        <dbReference type="ChEBI" id="CHEBI:18420"/>
    </cofactor>
</comment>
<comment type="pathway">
    <text evidence="1">Cofactor biosynthesis; thiamine diphosphate biosynthesis; 4-methyl-5-(2-phosphoethyl)-thiazole from 5-(2-hydroxyethyl)-4-methylthiazole: step 1/1.</text>
</comment>
<comment type="similarity">
    <text evidence="1">Belongs to the Thz kinase family.</text>
</comment>
<name>THIM_KINRD</name>
<feature type="chain" id="PRO_0000383868" description="Hydroxyethylthiazole kinase">
    <location>
        <begin position="1"/>
        <end position="275"/>
    </location>
</feature>
<feature type="binding site" evidence="1">
    <location>
        <position position="53"/>
    </location>
    <ligand>
        <name>substrate</name>
    </ligand>
</feature>
<feature type="binding site" evidence="1">
    <location>
        <position position="128"/>
    </location>
    <ligand>
        <name>ATP</name>
        <dbReference type="ChEBI" id="CHEBI:30616"/>
    </ligand>
</feature>
<feature type="binding site" evidence="1">
    <location>
        <position position="174"/>
    </location>
    <ligand>
        <name>ATP</name>
        <dbReference type="ChEBI" id="CHEBI:30616"/>
    </ligand>
</feature>
<feature type="binding site" evidence="1">
    <location>
        <position position="201"/>
    </location>
    <ligand>
        <name>substrate</name>
    </ligand>
</feature>
<reference key="1">
    <citation type="journal article" date="2008" name="PLoS ONE">
        <title>Survival in nuclear waste, extreme resistance, and potential applications gleaned from the genome sequence of Kineococcus radiotolerans SRS30216.</title>
        <authorList>
            <person name="Bagwell C.E."/>
            <person name="Bhat S."/>
            <person name="Hawkins G.M."/>
            <person name="Smith B.W."/>
            <person name="Biswas T."/>
            <person name="Hoover T.R."/>
            <person name="Saunders E."/>
            <person name="Han C.S."/>
            <person name="Tsodikov O.V."/>
            <person name="Shimkets L.J."/>
        </authorList>
    </citation>
    <scope>NUCLEOTIDE SEQUENCE [LARGE SCALE GENOMIC DNA]</scope>
    <source>
        <strain>ATCC BAA-149 / DSM 14245 / SRS30216</strain>
    </source>
</reference>
<sequence length="275" mass="27435">MSAVAPHPVPAPALAAARAALTERAPLVQCLTNSVVQTITANALLAAGAAPAMVDNVHESAAFAQIASAVLVNVGTLDDDRARAMGLAAQSADRSRTPWVLDPVAVGGLEFRTRVARDLLASSPTVVRGNASEVLGLAGAGSGGRGVDSTAGAEEAVEAARELSRRTGGAVAVSGVVDVLVHDGRTLRVSGGHVLLTRTTGAGCSLGALVAAYAAVEDDPLVAAAAAHVHVAIAAERAAARAARPGSFATAWIDELDAVDADAVRADLETSGRLA</sequence>
<keyword id="KW-0067">ATP-binding</keyword>
<keyword id="KW-0418">Kinase</keyword>
<keyword id="KW-0460">Magnesium</keyword>
<keyword id="KW-0479">Metal-binding</keyword>
<keyword id="KW-0547">Nucleotide-binding</keyword>
<keyword id="KW-1185">Reference proteome</keyword>
<keyword id="KW-0784">Thiamine biosynthesis</keyword>
<keyword id="KW-0808">Transferase</keyword>
<gene>
    <name evidence="1" type="primary">thiM</name>
    <name type="ordered locus">Krad_0852</name>
</gene>